<name>HKM12_ASPHA</name>
<sequence length="700" mass="75940">MLSKYQPSAHIAVTRAHWEDLHQAISSGKVTIDGNSLTLADVVAVSKFGCYARLSENRETIDAINESVSTLQECLDEGHHIYGVNTGFGGSADSRTDHLASLQRALLQLLQSGILTKADIGSGDTPSQSHAMPPEWVKAIMVVRSNSVARGHSAVSIGSIEAILRLLQRDITPVVPLRGTISASGDLMPLAYIVGAIEGNPGVFARAGKSPHGQALPAQQVLEQLGIPRITLGPKEALGLVNGTAASAALSSLVLYEAHRLALLSQVTTALTVEALRGSAESFHPFISQARPHDGQMEAASNILTVMRGSRLAMGTSEVQTGLVQDRYSLRTASQWIGPQLEDLLLADRQITVELNSTTDNPLIDSVSRHFYCGGNFQATSVTSAMEKTRLALQMLGKLMFAQCSEMIDPSLNNGLPTNLVADDPSLSFTMKGVDISMAAYMSELAYLANPVSSHVQTAEMHNQAVNSLAFVSARYTMQAVDIVSMMSACSLYVACQALDLRVLQLNFFRELHPIVCNGTHDAFHTILAPKELERITQQLVTAIQDAWLTTSRMDAGDRCQRVIKLSLPILLNEMRGAIPSDRQQVDLLTSIGNWEEATCYKMLEAYKQTHERFCRTQNTVEYLGAGSKAIYHAIRHKVGVPFHQGFVEQPSADDLDTTAIINGREKKTTGGWISLIYEALRDDSLTGVILEAVQPVRSI</sequence>
<organism>
    <name type="scientific">Aspergillus hancockii</name>
    <dbReference type="NCBI Taxonomy" id="1873369"/>
    <lineage>
        <taxon>Eukaryota</taxon>
        <taxon>Fungi</taxon>
        <taxon>Dikarya</taxon>
        <taxon>Ascomycota</taxon>
        <taxon>Pezizomycotina</taxon>
        <taxon>Eurotiomycetes</taxon>
        <taxon>Eurotiomycetidae</taxon>
        <taxon>Eurotiales</taxon>
        <taxon>Aspergillaceae</taxon>
        <taxon>Aspergillus</taxon>
        <taxon>Aspergillus subgen. Circumdati</taxon>
    </lineage>
</organism>
<evidence type="ECO:0000250" key="1">
    <source>
        <dbReference type="UniProtKB" id="P11544"/>
    </source>
</evidence>
<evidence type="ECO:0000250" key="2">
    <source>
        <dbReference type="UniProtKB" id="Q68G84"/>
    </source>
</evidence>
<evidence type="ECO:0000255" key="3">
    <source>
        <dbReference type="PROSITE-ProRule" id="PRU10122"/>
    </source>
</evidence>
<evidence type="ECO:0000255" key="4">
    <source>
        <dbReference type="RuleBase" id="RU003955"/>
    </source>
</evidence>
<evidence type="ECO:0000269" key="5">
    <source>
    </source>
</evidence>
<evidence type="ECO:0000303" key="6">
    <source>
    </source>
</evidence>
<evidence type="ECO:0000305" key="7"/>
<evidence type="ECO:0000305" key="8">
    <source>
    </source>
</evidence>
<keyword id="KW-0456">Lyase</keyword>
<keyword id="KW-0585">Phenylalanine catabolism</keyword>
<comment type="function">
    <text evidence="5 8">Phenylalanine ammonia-lyase; part of the gene cluster that mediates the biosynthesis of hancockiamides, an unusual new family of N-cinnamoylated piperazines (PubMed:33242032). The NRPS hkm10 and the NmrA-like reductase hkm9 are proposed to convert two molecules of L-Phe to the intermediary piperazine called xenocockiamide A (Probable). Xenocockiamide A is then converted to hancockiamide D via a series of hydroxylations and O-methylations (Probable). The tyrosinase hkm6 may catalyze an aromatic hydroxylation, then the 2-oxoglutarate-dependent Fe(II) dioxygenase hkm4 and the FAD-dependent phenol hydroxylase hkm7 may catalyze consecutive hydroxylations to install 2 more hydroxy groups, and the methyltransferase hkm8 probably catalyzes two methylations using 2 molecules of S-adenosyl-L-methionine (SAM) (Probable). The NRPS hkm11 activates and transfers trans-cinnamate supplied by the PAL hkm12 to hancockiamide D and produces hancockiamide A (PubMed:33242032). NRPS Hkm11 has the flexibility to tolerate the bulky hancockiamide G as a substrate and the absence of the acetyl-transferase hkm3 opens up the opportunity for hkm11 to introduce a second N-cinnamoyl moiety (PubMed:33242032). The cytochrome P450 monooxygenase hkm5 catalyzes the methylenedioxy bridge formation, converting hancockiamide A into hancockiamide G (PubMed:33242032). Hkm5 can also convert hancockiamide B into hancockiamide C, and hancockiamide D into hancockiamide H (PubMed:33242032). The N-acetyltransferase hkm3 finally transfers an acetyl group to 1-N of piperazine, converting hancockiamide A into hancockiamide B and hancockiamide G into hancockiamide C (PubMed:33242032).</text>
</comment>
<comment type="catalytic activity">
    <reaction evidence="4">
        <text>L-phenylalanine = (E)-cinnamate + NH4(+)</text>
        <dbReference type="Rhea" id="RHEA:21384"/>
        <dbReference type="ChEBI" id="CHEBI:15669"/>
        <dbReference type="ChEBI" id="CHEBI:28938"/>
        <dbReference type="ChEBI" id="CHEBI:58095"/>
        <dbReference type="EC" id="4.3.1.24"/>
    </reaction>
    <physiologicalReaction direction="left-to-right" evidence="8">
        <dbReference type="Rhea" id="RHEA:21385"/>
    </physiologicalReaction>
</comment>
<comment type="pathway">
    <text evidence="8">Secondary metabolite biosynthesis.</text>
</comment>
<comment type="PTM">
    <text evidence="2">Contains an active site 4-methylidene-imidazol-5-one (MIO), which is formed autocatalytically by cyclization and dehydration of residues Ala-Ser-Gly.</text>
</comment>
<comment type="biotechnology">
    <text evidence="5">Hancockiamide D displays potent cytotoxic activity against murine myeloma NS-1 cells, suggesting a potential antitumour application (PubMed:33242032). More interestingly, hancockiamide C, the likely end metabolite of the hkm pathway, shows potent Arabidopsis thaliana seed anti-germination activity, but is inactive against the monocot Eragrostis tef seed, suggesting that it could be a herbicidal lead targeting monocots (PubMed:33242032). The herbicidal activity of hancockiamide C could be due to its phenylpropanoid-like structural features, which may act on the plant lignan pathways, and hence warrants further investigations (PubMed:33242032).</text>
</comment>
<comment type="similarity">
    <text evidence="7">Belongs to the PAL/histidase family.</text>
</comment>
<protein>
    <recommendedName>
        <fullName evidence="6">Phenylalanine ammonia-lyase hkm12</fullName>
        <shortName evidence="6">PAL</shortName>
        <ecNumber evidence="8">4.3.1.24</ecNumber>
    </recommendedName>
    <alternativeName>
        <fullName evidence="6">Hancockiamides biosynthesis cluster protein 12</fullName>
    </alternativeName>
</protein>
<accession>P0DUM0</accession>
<proteinExistence type="evidence at protein level"/>
<dbReference type="EC" id="4.3.1.24" evidence="8"/>
<dbReference type="EMBL" id="MBFL02000005">
    <property type="protein sequence ID" value="KAF7597138.1"/>
    <property type="molecule type" value="Genomic_DNA"/>
</dbReference>
<dbReference type="SMR" id="P0DUM0"/>
<dbReference type="OrthoDB" id="10051290at2759"/>
<dbReference type="GO" id="GO:0005737">
    <property type="term" value="C:cytoplasm"/>
    <property type="evidence" value="ECO:0007669"/>
    <property type="project" value="InterPro"/>
</dbReference>
<dbReference type="GO" id="GO:0045548">
    <property type="term" value="F:phenylalanine ammonia-lyase activity"/>
    <property type="evidence" value="ECO:0007669"/>
    <property type="project" value="UniProtKB-EC"/>
</dbReference>
<dbReference type="GO" id="GO:0006559">
    <property type="term" value="P:L-phenylalanine catabolic process"/>
    <property type="evidence" value="ECO:0007669"/>
    <property type="project" value="UniProtKB-KW"/>
</dbReference>
<dbReference type="CDD" id="cd00332">
    <property type="entry name" value="PAL-HAL"/>
    <property type="match status" value="1"/>
</dbReference>
<dbReference type="Gene3D" id="1.20.200.10">
    <property type="entry name" value="Fumarase/aspartase (Central domain)"/>
    <property type="match status" value="1"/>
</dbReference>
<dbReference type="Gene3D" id="1.10.275.10">
    <property type="entry name" value="Fumarase/aspartase (N-terminal domain)"/>
    <property type="match status" value="1"/>
</dbReference>
<dbReference type="Gene3D" id="1.10.274.20">
    <property type="entry name" value="Phenylalanine ammonia-lyase 1, domain 3"/>
    <property type="match status" value="1"/>
</dbReference>
<dbReference type="InterPro" id="IPR001106">
    <property type="entry name" value="Aromatic_Lyase"/>
</dbReference>
<dbReference type="InterPro" id="IPR024083">
    <property type="entry name" value="Fumarase/histidase_N"/>
</dbReference>
<dbReference type="InterPro" id="IPR008948">
    <property type="entry name" value="L-Aspartase-like"/>
</dbReference>
<dbReference type="InterPro" id="IPR022313">
    <property type="entry name" value="Phe/His_NH3-lyase_AS"/>
</dbReference>
<dbReference type="InterPro" id="IPR005922">
    <property type="entry name" value="Phe_NH3-lyase"/>
</dbReference>
<dbReference type="InterPro" id="IPR023144">
    <property type="entry name" value="Phe_NH3-lyase_shielding_dom_sf"/>
</dbReference>
<dbReference type="NCBIfam" id="TIGR01226">
    <property type="entry name" value="phe_am_lyase"/>
    <property type="match status" value="1"/>
</dbReference>
<dbReference type="PANTHER" id="PTHR10362">
    <property type="entry name" value="HISTIDINE AMMONIA-LYASE"/>
    <property type="match status" value="1"/>
</dbReference>
<dbReference type="Pfam" id="PF00221">
    <property type="entry name" value="Lyase_aromatic"/>
    <property type="match status" value="1"/>
</dbReference>
<dbReference type="SUPFAM" id="SSF48557">
    <property type="entry name" value="L-aspartase-like"/>
    <property type="match status" value="1"/>
</dbReference>
<dbReference type="PROSITE" id="PS00488">
    <property type="entry name" value="PAL_HISTIDASE"/>
    <property type="match status" value="1"/>
</dbReference>
<reference key="1">
    <citation type="submission" date="2019-04" db="EMBL/GenBank/DDBJ databases">
        <authorList>
            <person name="Gilchrist C.L.M."/>
            <person name="Chooi Y.H."/>
        </authorList>
    </citation>
    <scope>NUCLEOTIDE SEQUENCE [LARGE SCALE GENOMIC DNA]</scope>
    <source>
        <strain>FRR 3425 / CBS 142004 / DTO 360-G7</strain>
    </source>
</reference>
<reference key="2">
    <citation type="journal article" date="2021" name="Org. Biomol. Chem.">
        <title>Hancockiamides: phenylpropanoid piperazines from Aspergillus hancockii are biosynthesised by a versatile dual single-module NRPS pathway.</title>
        <authorList>
            <person name="Li H."/>
            <person name="Lacey A.E."/>
            <person name="Shu S."/>
            <person name="Kalaitzis J.A."/>
            <person name="Vuong D."/>
            <person name="Crombie A."/>
            <person name="Hu J."/>
            <person name="Gilchrist C.L.M."/>
            <person name="Lacey E."/>
            <person name="Piggott A.M."/>
            <person name="Chooi Y.H."/>
        </authorList>
    </citation>
    <scope>FUNCTION</scope>
    <scope>PATHWAY</scope>
    <scope>BIOTECHNOLOGY</scope>
</reference>
<feature type="chain" id="PRO_0000452939" description="Phenylalanine ammonia-lyase hkm12">
    <location>
        <begin position="1"/>
        <end position="700"/>
    </location>
</feature>
<feature type="active site" description="Proton donor/acceptor" evidence="2">
    <location>
        <position position="82"/>
    </location>
</feature>
<feature type="binding site" evidence="2">
    <location>
        <position position="242"/>
    </location>
    <ligand>
        <name>(E)-cinnamate</name>
        <dbReference type="ChEBI" id="CHEBI:15669"/>
    </ligand>
</feature>
<feature type="binding site" evidence="2">
    <location>
        <position position="325"/>
    </location>
    <ligand>
        <name>(E)-cinnamate</name>
        <dbReference type="ChEBI" id="CHEBI:15669"/>
    </ligand>
</feature>
<feature type="binding site" evidence="2">
    <location>
        <position position="331"/>
    </location>
    <ligand>
        <name>(E)-cinnamate</name>
        <dbReference type="ChEBI" id="CHEBI:15669"/>
    </ligand>
</feature>
<feature type="binding site" evidence="2">
    <location>
        <position position="361"/>
    </location>
    <ligand>
        <name>(E)-cinnamate</name>
        <dbReference type="ChEBI" id="CHEBI:15669"/>
    </ligand>
</feature>
<feature type="binding site" evidence="1">
    <location>
        <position position="432"/>
    </location>
    <ligand>
        <name>(E)-cinnamate</name>
        <dbReference type="ChEBI" id="CHEBI:15669"/>
    </ligand>
</feature>
<feature type="binding site" evidence="1">
    <location>
        <position position="460"/>
    </location>
    <ligand>
        <name>(E)-cinnamate</name>
        <dbReference type="ChEBI" id="CHEBI:15669"/>
    </ligand>
</feature>
<feature type="binding site" evidence="2">
    <location>
        <position position="463"/>
    </location>
    <ligand>
        <name>(E)-cinnamate</name>
        <dbReference type="ChEBI" id="CHEBI:15669"/>
    </ligand>
</feature>
<feature type="modified residue" description="2,3-didehydroalanine (Ser)" evidence="3">
    <location>
        <position position="184"/>
    </location>
</feature>
<feature type="cross-link" description="5-imidazolinone (Ala-Gly)" evidence="2">
    <location>
        <begin position="183"/>
        <end position="185"/>
    </location>
</feature>